<keyword id="KW-0597">Phosphoprotein</keyword>
<protein>
    <recommendedName>
        <fullName>Altered inheritance of mitochondria protein 44</fullName>
    </recommendedName>
</protein>
<proteinExistence type="inferred from homology"/>
<accession>B3LKR9</accession>
<reference key="1">
    <citation type="submission" date="2005-03" db="EMBL/GenBank/DDBJ databases">
        <title>Annotation of the Saccharomyces cerevisiae RM11-1a genome.</title>
        <authorList>
            <consortium name="The Broad Institute Genome Sequencing Platform"/>
            <person name="Birren B.W."/>
            <person name="Lander E.S."/>
            <person name="Galagan J.E."/>
            <person name="Nusbaum C."/>
            <person name="Devon K."/>
            <person name="Cuomo C."/>
            <person name="Jaffe D.B."/>
            <person name="Butler J."/>
            <person name="Alvarez P."/>
            <person name="Gnerre S."/>
            <person name="Grabherr M."/>
            <person name="Kleber M."/>
            <person name="Mauceli E.W."/>
            <person name="Brockman W."/>
            <person name="MacCallum I.A."/>
            <person name="Rounsley S."/>
            <person name="Young S.K."/>
            <person name="LaButti K."/>
            <person name="Pushparaj V."/>
            <person name="DeCaprio D."/>
            <person name="Crawford M."/>
            <person name="Koehrsen M."/>
            <person name="Engels R."/>
            <person name="Montgomery P."/>
            <person name="Pearson M."/>
            <person name="Howarth C."/>
            <person name="Larson L."/>
            <person name="Luoma S."/>
            <person name="White J."/>
            <person name="O'Leary S."/>
            <person name="Kodira C.D."/>
            <person name="Zeng Q."/>
            <person name="Yandava C."/>
            <person name="Alvarado L."/>
            <person name="Pratt S."/>
            <person name="Kruglyak L."/>
        </authorList>
    </citation>
    <scope>NUCLEOTIDE SEQUENCE [LARGE SCALE GENOMIC DNA]</scope>
    <source>
        <strain>RM11-1a</strain>
    </source>
</reference>
<feature type="chain" id="PRO_0000408699" description="Altered inheritance of mitochondria protein 44">
    <location>
        <begin position="1"/>
        <end position="758"/>
    </location>
</feature>
<feature type="region of interest" description="Disordered" evidence="3">
    <location>
        <begin position="55"/>
        <end position="77"/>
    </location>
</feature>
<feature type="region of interest" description="Disordered" evidence="3">
    <location>
        <begin position="314"/>
        <end position="414"/>
    </location>
</feature>
<feature type="region of interest" description="Disordered" evidence="3">
    <location>
        <begin position="636"/>
        <end position="708"/>
    </location>
</feature>
<feature type="compositionally biased region" description="Low complexity" evidence="3">
    <location>
        <begin position="315"/>
        <end position="330"/>
    </location>
</feature>
<feature type="compositionally biased region" description="Polar residues" evidence="3">
    <location>
        <begin position="338"/>
        <end position="348"/>
    </location>
</feature>
<feature type="compositionally biased region" description="Polar residues" evidence="3">
    <location>
        <begin position="355"/>
        <end position="368"/>
    </location>
</feature>
<feature type="compositionally biased region" description="Polar residues" evidence="3">
    <location>
        <begin position="400"/>
        <end position="414"/>
    </location>
</feature>
<feature type="compositionally biased region" description="Acidic residues" evidence="3">
    <location>
        <begin position="651"/>
        <end position="689"/>
    </location>
</feature>
<feature type="compositionally biased region" description="Basic and acidic residues" evidence="3">
    <location>
        <begin position="690"/>
        <end position="705"/>
    </location>
</feature>
<feature type="modified residue" description="Phosphoserine" evidence="2">
    <location>
        <position position="25"/>
    </location>
</feature>
<organism>
    <name type="scientific">Saccharomyces cerevisiae (strain RM11-1a)</name>
    <name type="common">Baker's yeast</name>
    <dbReference type="NCBI Taxonomy" id="285006"/>
    <lineage>
        <taxon>Eukaryota</taxon>
        <taxon>Fungi</taxon>
        <taxon>Dikarya</taxon>
        <taxon>Ascomycota</taxon>
        <taxon>Saccharomycotina</taxon>
        <taxon>Saccharomycetes</taxon>
        <taxon>Saccharomycetales</taxon>
        <taxon>Saccharomycetaceae</taxon>
        <taxon>Saccharomyces</taxon>
    </lineage>
</organism>
<comment type="subcellular location">
    <subcellularLocation>
        <location evidence="1">Bud neck</location>
    </subcellularLocation>
</comment>
<comment type="similarity">
    <text evidence="4">Belongs to the AIM44 family.</text>
</comment>
<sequence length="758" mass="84729">MIIRAPIRTKTKSFRGDQMDFKFPSNESLPRGTLEEYHLNNHHLLNDVFAAENGVSRDEDGNSQILSDYTSTSNTNTNSGYSSNGYYSFANISDNTTSSPRIVINQNETARLTSSDSNKSDFFASHDFPGNDSLHYSSSSVVKNQLHSMEAIPEGNITGSISTAFQTIPTADNVSYDIAPSSASSLLPRKSTSKSAILPSTQEAKPMTKLNMEKDIKTIELNNSVVPKPKKKLNRVPTIRRVESSRFSNSRYSSSVSSKSSSSRCSLKRSKAIRCKGGLLYYFTSLGIKIKKKLRKLRLVLRRRLFSYNVQKVPSATNSKTTKSKANINNKSKKRGTNLVNKNSNSTPRQKKSQRYVSNLQRSISSKSLVPVLAPQKKTKPLTVDTKFKANHPQSEDSKVGSNTPRSPLVSYTPSLRRTNSSIRRAASILTASATMTPANNKNSFISVPDNVSHAVTRNSSMYSRSRLVRSKPSTALNAIARQPSIVVENKVIPLSMNRYSIKEEDEYVIDTSSMRELSPVNSVCSSDYDRESSESYSNYADAMETTEVDNKDRVECNNEIQNVNANNEETSNEESYNLMKHYLSTVIAQRIMLRVQIARIQNNKSNVVYMNKSAETNSTIYEDLADSLLTEYEADGSSSQIFDGVSVRADEEEEEDEDDEDDEEEEEENDDEEDEEDEEDDEDDEEEEEKRKEGEGRNLAKEVDELAELSPMRKQSDLSITLRSPFAMLNSAYSNSIISLPTGVVKRSLTLPVGMKI</sequence>
<name>AIM44_YEAS1</name>
<dbReference type="EMBL" id="CH408046">
    <property type="protein sequence ID" value="EDV11067.1"/>
    <property type="molecule type" value="Genomic_DNA"/>
</dbReference>
<dbReference type="SMR" id="B3LKR9"/>
<dbReference type="HOGENOM" id="CLU_385965_0_0_1"/>
<dbReference type="OrthoDB" id="36972at4893"/>
<dbReference type="Proteomes" id="UP000008335">
    <property type="component" value="Unassembled WGS sequence"/>
</dbReference>
<dbReference type="GO" id="GO:0005935">
    <property type="term" value="C:cellular bud neck"/>
    <property type="evidence" value="ECO:0007669"/>
    <property type="project" value="UniProtKB-SubCell"/>
</dbReference>
<evidence type="ECO:0000250" key="1"/>
<evidence type="ECO:0000250" key="2">
    <source>
        <dbReference type="UniProtKB" id="Q99299"/>
    </source>
</evidence>
<evidence type="ECO:0000256" key="3">
    <source>
        <dbReference type="SAM" id="MobiDB-lite"/>
    </source>
</evidence>
<evidence type="ECO:0000305" key="4"/>
<gene>
    <name type="primary">AIM44</name>
    <name type="ORF">SCRG_02338</name>
</gene>